<feature type="chain" id="PRO_0000358571" description="NAD(P)H-quinone oxidoreductase subunit K, chloroplastic">
    <location>
        <begin position="1"/>
        <end position="225"/>
    </location>
</feature>
<feature type="binding site" evidence="1">
    <location>
        <position position="43"/>
    </location>
    <ligand>
        <name>[4Fe-4S] cluster</name>
        <dbReference type="ChEBI" id="CHEBI:49883"/>
    </ligand>
</feature>
<feature type="binding site" evidence="1">
    <location>
        <position position="44"/>
    </location>
    <ligand>
        <name>[4Fe-4S] cluster</name>
        <dbReference type="ChEBI" id="CHEBI:49883"/>
    </ligand>
</feature>
<feature type="binding site" evidence="1">
    <location>
        <position position="108"/>
    </location>
    <ligand>
        <name>[4Fe-4S] cluster</name>
        <dbReference type="ChEBI" id="CHEBI:49883"/>
    </ligand>
</feature>
<feature type="binding site" evidence="1">
    <location>
        <position position="139"/>
    </location>
    <ligand>
        <name>[4Fe-4S] cluster</name>
        <dbReference type="ChEBI" id="CHEBI:49883"/>
    </ligand>
</feature>
<protein>
    <recommendedName>
        <fullName evidence="1">NAD(P)H-quinone oxidoreductase subunit K, chloroplastic</fullName>
        <ecNumber evidence="1">7.1.1.-</ecNumber>
    </recommendedName>
    <alternativeName>
        <fullName evidence="1">NAD(P)H dehydrogenase subunit K</fullName>
    </alternativeName>
    <alternativeName>
        <fullName evidence="1">NADH-plastoquinone oxidoreductase subunit K</fullName>
    </alternativeName>
</protein>
<reference key="1">
    <citation type="submission" date="2007-03" db="EMBL/GenBank/DDBJ databases">
        <title>Sequence analysis of Arabidopsis pumila JS2 chloroplast DNA.</title>
        <authorList>
            <person name="Hosouchi T."/>
            <person name="Tsuruoka H."/>
            <person name="Kotani H."/>
        </authorList>
    </citation>
    <scope>NUCLEOTIDE SEQUENCE [LARGE SCALE GENOMIC DNA]</scope>
</reference>
<accession>A4QJT7</accession>
<evidence type="ECO:0000255" key="1">
    <source>
        <dbReference type="HAMAP-Rule" id="MF_01356"/>
    </source>
</evidence>
<geneLocation type="chloroplast"/>
<organism>
    <name type="scientific">Olimarabidopsis pumila</name>
    <name type="common">Dwarf rocket</name>
    <name type="synonym">Arabidopsis griffithiana</name>
    <dbReference type="NCBI Taxonomy" id="74718"/>
    <lineage>
        <taxon>Eukaryota</taxon>
        <taxon>Viridiplantae</taxon>
        <taxon>Streptophyta</taxon>
        <taxon>Embryophyta</taxon>
        <taxon>Tracheophyta</taxon>
        <taxon>Spermatophyta</taxon>
        <taxon>Magnoliopsida</taxon>
        <taxon>eudicotyledons</taxon>
        <taxon>Gunneridae</taxon>
        <taxon>Pentapetalae</taxon>
        <taxon>rosids</taxon>
        <taxon>malvids</taxon>
        <taxon>Brassicales</taxon>
        <taxon>Brassicaceae</taxon>
        <taxon>Alyssopsideae</taxon>
        <taxon>Olimarabidopsis</taxon>
    </lineage>
</organism>
<sequence>MNSIKFPVLDRTTKNSVISTTLNDLSNWSRLSSLWPLLYGTSCCFIEFASLIGSRFDFDRYGLVPRSSPRQADLILTAGTVTMKMAPSLVRLYEQMPEPKYVIAMGACTITGGMFSTDSYSTVRGVDKLIPVDVYLPGCPPKPEAVIDAITKLRKKIAREIYKDRIRPQQGNRCFTTNHKFFVVRSPHTGNYDQELLYPPSSTSEISTETFFKYKSPVSSHELVN</sequence>
<keyword id="KW-0004">4Fe-4S</keyword>
<keyword id="KW-0150">Chloroplast</keyword>
<keyword id="KW-0408">Iron</keyword>
<keyword id="KW-0411">Iron-sulfur</keyword>
<keyword id="KW-0472">Membrane</keyword>
<keyword id="KW-0479">Metal-binding</keyword>
<keyword id="KW-0520">NAD</keyword>
<keyword id="KW-0521">NADP</keyword>
<keyword id="KW-0934">Plastid</keyword>
<keyword id="KW-0618">Plastoquinone</keyword>
<keyword id="KW-0874">Quinone</keyword>
<keyword id="KW-0793">Thylakoid</keyword>
<keyword id="KW-1278">Translocase</keyword>
<keyword id="KW-0813">Transport</keyword>
<comment type="function">
    <text evidence="1">NDH shuttles electrons from NAD(P)H:plastoquinone, via FMN and iron-sulfur (Fe-S) centers, to quinones in the photosynthetic chain and possibly in a chloroplast respiratory chain. The immediate electron acceptor for the enzyme in this species is believed to be plastoquinone. Couples the redox reaction to proton translocation, and thus conserves the redox energy in a proton gradient.</text>
</comment>
<comment type="catalytic activity">
    <reaction evidence="1">
        <text>a plastoquinone + NADH + (n+1) H(+)(in) = a plastoquinol + NAD(+) + n H(+)(out)</text>
        <dbReference type="Rhea" id="RHEA:42608"/>
        <dbReference type="Rhea" id="RHEA-COMP:9561"/>
        <dbReference type="Rhea" id="RHEA-COMP:9562"/>
        <dbReference type="ChEBI" id="CHEBI:15378"/>
        <dbReference type="ChEBI" id="CHEBI:17757"/>
        <dbReference type="ChEBI" id="CHEBI:57540"/>
        <dbReference type="ChEBI" id="CHEBI:57945"/>
        <dbReference type="ChEBI" id="CHEBI:62192"/>
    </reaction>
</comment>
<comment type="catalytic activity">
    <reaction evidence="1">
        <text>a plastoquinone + NADPH + (n+1) H(+)(in) = a plastoquinol + NADP(+) + n H(+)(out)</text>
        <dbReference type="Rhea" id="RHEA:42612"/>
        <dbReference type="Rhea" id="RHEA-COMP:9561"/>
        <dbReference type="Rhea" id="RHEA-COMP:9562"/>
        <dbReference type="ChEBI" id="CHEBI:15378"/>
        <dbReference type="ChEBI" id="CHEBI:17757"/>
        <dbReference type="ChEBI" id="CHEBI:57783"/>
        <dbReference type="ChEBI" id="CHEBI:58349"/>
        <dbReference type="ChEBI" id="CHEBI:62192"/>
    </reaction>
</comment>
<comment type="cofactor">
    <cofactor evidence="1">
        <name>[4Fe-4S] cluster</name>
        <dbReference type="ChEBI" id="CHEBI:49883"/>
    </cofactor>
    <text evidence="1">Binds 1 [4Fe-4S] cluster.</text>
</comment>
<comment type="subunit">
    <text evidence="1">NDH is composed of at least 16 different subunits, 5 of which are encoded in the nucleus.</text>
</comment>
<comment type="subcellular location">
    <subcellularLocation>
        <location evidence="1">Plastid</location>
        <location evidence="1">Chloroplast thylakoid membrane</location>
        <topology evidence="1">Peripheral membrane protein</topology>
        <orientation evidence="1">Stromal side</orientation>
    </subcellularLocation>
</comment>
<comment type="similarity">
    <text evidence="1">Belongs to the complex I 20 kDa subunit family.</text>
</comment>
<dbReference type="EC" id="7.1.1.-" evidence="1"/>
<dbReference type="EMBL" id="AP009368">
    <property type="protein sequence ID" value="BAF49943.1"/>
    <property type="molecule type" value="Genomic_DNA"/>
</dbReference>
<dbReference type="RefSeq" id="YP_001123119.1">
    <property type="nucleotide sequence ID" value="NC_009267.1"/>
</dbReference>
<dbReference type="SMR" id="A4QJT7"/>
<dbReference type="GeneID" id="4962405"/>
<dbReference type="GO" id="GO:0009535">
    <property type="term" value="C:chloroplast thylakoid membrane"/>
    <property type="evidence" value="ECO:0007669"/>
    <property type="project" value="UniProtKB-SubCell"/>
</dbReference>
<dbReference type="GO" id="GO:0045271">
    <property type="term" value="C:respiratory chain complex I"/>
    <property type="evidence" value="ECO:0007669"/>
    <property type="project" value="TreeGrafter"/>
</dbReference>
<dbReference type="GO" id="GO:0051539">
    <property type="term" value="F:4 iron, 4 sulfur cluster binding"/>
    <property type="evidence" value="ECO:0007669"/>
    <property type="project" value="UniProtKB-KW"/>
</dbReference>
<dbReference type="GO" id="GO:0005506">
    <property type="term" value="F:iron ion binding"/>
    <property type="evidence" value="ECO:0007669"/>
    <property type="project" value="UniProtKB-UniRule"/>
</dbReference>
<dbReference type="GO" id="GO:0008137">
    <property type="term" value="F:NADH dehydrogenase (ubiquinone) activity"/>
    <property type="evidence" value="ECO:0007669"/>
    <property type="project" value="InterPro"/>
</dbReference>
<dbReference type="GO" id="GO:0048038">
    <property type="term" value="F:quinone binding"/>
    <property type="evidence" value="ECO:0007669"/>
    <property type="project" value="UniProtKB-KW"/>
</dbReference>
<dbReference type="GO" id="GO:0009060">
    <property type="term" value="P:aerobic respiration"/>
    <property type="evidence" value="ECO:0007669"/>
    <property type="project" value="TreeGrafter"/>
</dbReference>
<dbReference type="GO" id="GO:0015990">
    <property type="term" value="P:electron transport coupled proton transport"/>
    <property type="evidence" value="ECO:0007669"/>
    <property type="project" value="TreeGrafter"/>
</dbReference>
<dbReference type="GO" id="GO:0019684">
    <property type="term" value="P:photosynthesis, light reaction"/>
    <property type="evidence" value="ECO:0007669"/>
    <property type="project" value="UniProtKB-UniRule"/>
</dbReference>
<dbReference type="FunFam" id="3.40.50.12280:FF:000003">
    <property type="entry name" value="NAD(P)H-quinone oxidoreductase subunit K, chloroplastic"/>
    <property type="match status" value="1"/>
</dbReference>
<dbReference type="Gene3D" id="3.40.50.12280">
    <property type="match status" value="1"/>
</dbReference>
<dbReference type="HAMAP" id="MF_01356">
    <property type="entry name" value="NDH1_NuoB"/>
    <property type="match status" value="1"/>
</dbReference>
<dbReference type="InterPro" id="IPR006137">
    <property type="entry name" value="NADH_UbQ_OxRdtase-like_20kDa"/>
</dbReference>
<dbReference type="InterPro" id="IPR006138">
    <property type="entry name" value="NADH_UQ_OxRdtase_20Kd_su"/>
</dbReference>
<dbReference type="NCBIfam" id="TIGR01957">
    <property type="entry name" value="nuoB_fam"/>
    <property type="match status" value="1"/>
</dbReference>
<dbReference type="NCBIfam" id="NF005012">
    <property type="entry name" value="PRK06411.1"/>
    <property type="match status" value="1"/>
</dbReference>
<dbReference type="PANTHER" id="PTHR11995">
    <property type="entry name" value="NADH DEHYDROGENASE"/>
    <property type="match status" value="1"/>
</dbReference>
<dbReference type="PANTHER" id="PTHR11995:SF14">
    <property type="entry name" value="NADH DEHYDROGENASE [UBIQUINONE] IRON-SULFUR PROTEIN 7, MITOCHONDRIAL"/>
    <property type="match status" value="1"/>
</dbReference>
<dbReference type="Pfam" id="PF01058">
    <property type="entry name" value="Oxidored_q6"/>
    <property type="match status" value="1"/>
</dbReference>
<dbReference type="SUPFAM" id="SSF56770">
    <property type="entry name" value="HydA/Nqo6-like"/>
    <property type="match status" value="1"/>
</dbReference>
<dbReference type="PROSITE" id="PS01150">
    <property type="entry name" value="COMPLEX1_20K"/>
    <property type="match status" value="1"/>
</dbReference>
<name>NDHK_OLIPU</name>
<proteinExistence type="inferred from homology"/>
<gene>
    <name evidence="1" type="primary">ndhK</name>
</gene>